<protein>
    <recommendedName>
        <fullName>RNA-directed RNA polymerase VP2</fullName>
        <ecNumber>2.7.7.48</ecNumber>
    </recommendedName>
</protein>
<name>RDRP_AQRVC</name>
<proteinExistence type="evidence at protein level"/>
<reference key="1">
    <citation type="journal article" date="2002" name="J. Gen. Virol.">
        <title>Common evolutionary origin of aquareoviruses and orthoreoviruses revealed by genome characterization of Golden shiner reovirus, Grass carp reovirus, Striped bass reovirus and golden ide reovirus (genus Aquareovirus, family Reoviridae).</title>
        <authorList>
            <person name="Attoui H."/>
            <person name="Fang Q."/>
            <person name="Mohd Jaafar F."/>
            <person name="Cantaloube J.F."/>
            <person name="Biagini P."/>
            <person name="de Micco P."/>
            <person name="de Lamballerie X."/>
        </authorList>
    </citation>
    <scope>NUCLEOTIDE SEQUENCE [GENOMIC RNA]</scope>
</reference>
<reference key="2">
    <citation type="journal article" date="2005" name="Virology">
        <title>Expansion of family Reoviridae to include nine-segmented dsRNA viruses: isolation and characterization of a new virus designated Aedes pseudoscutellaris reovirus assigned to a proposed genus (Dinovernavirus).</title>
        <authorList>
            <person name="Attoui H."/>
            <person name="Mohd Jaafar F."/>
            <person name="Belhouchet M."/>
            <person name="Biagini P."/>
            <person name="Cantaloube J.F."/>
            <person name="de Micco P."/>
            <person name="de Lamballerie X."/>
        </authorList>
    </citation>
    <scope>NUCLEOTIDE SEQUENCE [GENOMIC RNA]</scope>
</reference>
<keyword id="KW-0002">3D-structure</keyword>
<keyword id="KW-0378">Hydrolase</keyword>
<keyword id="KW-0547">Nucleotide-binding</keyword>
<keyword id="KW-0548">Nucleotidyltransferase</keyword>
<keyword id="KW-1185">Reference proteome</keyword>
<keyword id="KW-0696">RNA-directed RNA polymerase</keyword>
<keyword id="KW-0808">Transferase</keyword>
<keyword id="KW-0693">Viral RNA replication</keyword>
<keyword id="KW-0946">Virion</keyword>
<sequence>MEELFNALPQPLQQLSLALAGEIPLTDHIFEQAASTWHVQPRSLTYKLLDHIPFSTPVVVPPSIYHSLDWSKCFAVNQDRVERVPTIDDPDDVYVPNSDIGPLLTSLHTIPDYGFLHPAIENDATTLRAERARCASTFYKIASSQARQVKLDPIRMLGFLLLVQARPRVPSGLVTDQPTRRDPTQSPALHAIWQVMQYYKVAGVYYAPALVVPSGAIWWIPPPGKRNVVSVQYLLTDLINLAILAHMTDMSPTLELTGVLMYLRAASSHSHAYTLLQMKSVFPALSLRSMYRNKGFGGKAPAIEWTEPRSKYKFRWTGVTQLHDGLRPRSPSMDVPTLEVLTKYELVDIGHIIIRERNAHPRHNHDSVRFVRDVMALTSGMYLVRQPTMSVLREYSQVPDIKDPIPPSAWTGPIGNVRYLLPSVQGPARHLYDTWRAAARQIAQDPQWHDPLNQAIMRAQYVTARGGSSASLKFALKVTGIVLPEYDDSKVKKSSKIYQAAQIARIAFMLLIAAIHAEVTMGIRNQVQRRARSIMPLNVIQQAISAPHTLVANYINKHMNLSTTSGSVVTDKVIPLILYASTPPNTVVNVDIKACDASITYNYFLSVICGAMHEGFEVGNADAAFMGVPSTIVSDRRSSVAPYSRPISGLQTMVQHLADLYAAGFRYSVSDAFSSGNKFSFPTSTFPSGSTATSTEHTANNSTMMEYFLNVHAPSHVKSASLKRILTDMTIQRNYVCQGDDGILLLPHEAASKISADDMNELLTCLRDYGQLFGWNYDIDWSDTAEYLKLYALMGCRIPNTSRHPPVGKEYAAPQTDEIWPSLIDIVIGHHLNGVTDVLNWREWLRFSWAFACYSSRGGYTNPKGQSFSAQYPWWTFVYLGIPPILLPGQTPFIHSCYMPPGDQGMFSILNGWRDWLISHASTTLPPLRHNHPVWGLSDVPSLLSQFGVYAGYHAAQHYRRPKPAPETASSDSINQITSDLTEYLFYDSALKARVMKGRYNWERLSSSLSLNVGSRVPSLFDVPGKWVAAGRDAEKPPPSSVEDMFTSLNRCIRRPTHSFSRLLELYLRVHVTLGESIPLAIDPDVPQVAGADPANDDHWFKYTCLGDIPSATRNYFGESLFVGRVVSGLDVEAVDATLLRLKILGAPPEAFIAVLNGIGMSDSEAHQIAGRISLANAQLVQIARVVHLSIPSSWMTLNTGPYIHHHAYDFKPGITQPSAKSRDKSIWMSPILKLLCTSYAMTVAGPVRTSIVTEIDGSAAALSGNLRVWMRDV</sequence>
<evidence type="ECO:0000255" key="1">
    <source>
        <dbReference type="PROSITE-ProRule" id="PRU00539"/>
    </source>
</evidence>
<evidence type="ECO:0000305" key="2"/>
<organism>
    <name type="scientific">Aquareovirus C (isolate Golden shiner/USA/GSRV/1977)</name>
    <name type="common">AQRV-C</name>
    <dbReference type="NCBI Taxonomy" id="185783"/>
    <lineage>
        <taxon>Viruses</taxon>
        <taxon>Riboviria</taxon>
        <taxon>Orthornavirae</taxon>
        <taxon>Duplornaviricota</taxon>
        <taxon>Resentoviricetes</taxon>
        <taxon>Reovirales</taxon>
        <taxon>Spinareoviridae</taxon>
        <taxon>Aquareovirus</taxon>
        <taxon>Aquareovirus ctenopharyngodontis</taxon>
    </lineage>
</organism>
<dbReference type="EC" id="2.7.7.48"/>
<dbReference type="EMBL" id="AF403399">
    <property type="protein sequence ID" value="AAM92745.1"/>
    <property type="molecule type" value="Genomic_RNA"/>
</dbReference>
<dbReference type="RefSeq" id="NP_938061.1">
    <property type="nucleotide sequence ID" value="NC_005167.1"/>
</dbReference>
<dbReference type="PDB" id="8FJK">
    <property type="method" value="EM"/>
    <property type="resolution" value="3.30 A"/>
    <property type="chains" value="A=2-1274"/>
</dbReference>
<dbReference type="PDB" id="8FJL">
    <property type="method" value="EM"/>
    <property type="resolution" value="3.27 A"/>
    <property type="chains" value="A=2-1274"/>
</dbReference>
<dbReference type="PDBsum" id="8FJK"/>
<dbReference type="PDBsum" id="8FJL"/>
<dbReference type="EMDB" id="EMD-29243"/>
<dbReference type="EMDB" id="EMD-29244"/>
<dbReference type="SMR" id="Q8JU61"/>
<dbReference type="KEGG" id="vg:2648330"/>
<dbReference type="Proteomes" id="UP000006713">
    <property type="component" value="Genome"/>
</dbReference>
<dbReference type="GO" id="GO:0019013">
    <property type="term" value="C:viral nucleocapsid"/>
    <property type="evidence" value="ECO:0007669"/>
    <property type="project" value="InterPro"/>
</dbReference>
<dbReference type="GO" id="GO:0016787">
    <property type="term" value="F:hydrolase activity"/>
    <property type="evidence" value="ECO:0007669"/>
    <property type="project" value="UniProtKB-KW"/>
</dbReference>
<dbReference type="GO" id="GO:0000166">
    <property type="term" value="F:nucleotide binding"/>
    <property type="evidence" value="ECO:0007669"/>
    <property type="project" value="UniProtKB-KW"/>
</dbReference>
<dbReference type="GO" id="GO:0003723">
    <property type="term" value="F:RNA binding"/>
    <property type="evidence" value="ECO:0007669"/>
    <property type="project" value="InterPro"/>
</dbReference>
<dbReference type="GO" id="GO:0003968">
    <property type="term" value="F:RNA-directed RNA polymerase activity"/>
    <property type="evidence" value="ECO:0007669"/>
    <property type="project" value="UniProtKB-KW"/>
</dbReference>
<dbReference type="GO" id="GO:0019079">
    <property type="term" value="P:viral genome replication"/>
    <property type="evidence" value="ECO:0007669"/>
    <property type="project" value="InterPro"/>
</dbReference>
<dbReference type="Gene3D" id="3.90.1850.10">
    <property type="entry name" value="RNA-directed RNA polymerase lambda-3"/>
    <property type="match status" value="1"/>
</dbReference>
<dbReference type="InterPro" id="IPR043502">
    <property type="entry name" value="DNA/RNA_pol_sf"/>
</dbReference>
<dbReference type="InterPro" id="IPR012915">
    <property type="entry name" value="RdRP_5"/>
</dbReference>
<dbReference type="InterPro" id="IPR007097">
    <property type="entry name" value="RNA-dir_pol_reovirus"/>
</dbReference>
<dbReference type="Pfam" id="PF07925">
    <property type="entry name" value="RdRP_5"/>
    <property type="match status" value="1"/>
</dbReference>
<dbReference type="SUPFAM" id="SSF56672">
    <property type="entry name" value="DNA/RNA polymerases"/>
    <property type="match status" value="1"/>
</dbReference>
<dbReference type="PROSITE" id="PS50523">
    <property type="entry name" value="RDRP_DSRNA_REO"/>
    <property type="match status" value="1"/>
</dbReference>
<comment type="function">
    <text evidence="1">RNA-directed RNA polymerase that is involved in transcription and genome replication. Following infection, it catalyzes the synthesis of fully conservative plus strands. After core assembly, which consists in recruitment of one capped plus-strand for each genomic segments and polymerase complexes, the polymerase switches mode and catalyzes the synthesis of complementary minus-strands (By similarity).</text>
</comment>
<comment type="catalytic activity">
    <reaction evidence="1">
        <text>RNA(n) + a ribonucleoside 5'-triphosphate = RNA(n+1) + diphosphate</text>
        <dbReference type="Rhea" id="RHEA:21248"/>
        <dbReference type="Rhea" id="RHEA-COMP:14527"/>
        <dbReference type="Rhea" id="RHEA-COMP:17342"/>
        <dbReference type="ChEBI" id="CHEBI:33019"/>
        <dbReference type="ChEBI" id="CHEBI:61557"/>
        <dbReference type="ChEBI" id="CHEBI:140395"/>
        <dbReference type="EC" id="2.7.7.48"/>
    </reaction>
</comment>
<comment type="subcellular location">
    <subcellularLocation>
        <location evidence="2">Virion</location>
    </subcellularLocation>
</comment>
<comment type="similarity">
    <text evidence="2">Belongs to the reoviridae RNA-directed RNA polymerase family.</text>
</comment>
<organismHost>
    <name type="scientific">Notemigonus crysoleucas</name>
    <name type="common">Golden shiner</name>
    <name type="synonym">Cyprinus crysoleucas</name>
    <dbReference type="NCBI Taxonomy" id="28800"/>
</organismHost>
<organismHost>
    <name type="scientific">Pimephales promelas</name>
    <name type="common">Fathead minnow</name>
    <dbReference type="NCBI Taxonomy" id="90988"/>
</organismHost>
<feature type="chain" id="PRO_0000404172" description="RNA-directed RNA polymerase VP2">
    <location>
        <begin position="1"/>
        <end position="1274"/>
    </location>
</feature>
<feature type="domain" description="RdRp catalytic" evidence="1">
    <location>
        <begin position="561"/>
        <end position="798"/>
    </location>
</feature>
<accession>Q8JU61</accession>
<gene>
    <name type="primary">S2</name>
</gene>